<proteinExistence type="inferred from homology"/>
<comment type="function">
    <text evidence="1">Mnh complex is a Na(+)/H(+) antiporter involved in Na(+) excretion.</text>
</comment>
<comment type="subunit">
    <text evidence="1">May form a heterooligomeric complex that consists of seven subunits: mnhA1, mnhB1, mnhC1, mnhD1, mnhE1, mnhF1 and mnhG1.</text>
</comment>
<comment type="subcellular location">
    <subcellularLocation>
        <location evidence="3">Cell membrane</location>
        <topology evidence="3">Multi-pass membrane protein</topology>
    </subcellularLocation>
</comment>
<comment type="similarity">
    <text evidence="3">Belongs to the CPA3 antiporters (TC 2.A.63) subunit G family.</text>
</comment>
<feature type="chain" id="PRO_0000086858" description="Na(+)/H(+) antiporter subunit G1">
    <location>
        <begin position="1"/>
        <end position="118"/>
    </location>
</feature>
<feature type="transmembrane region" description="Helical" evidence="2">
    <location>
        <begin position="7"/>
        <end position="29"/>
    </location>
</feature>
<feature type="transmembrane region" description="Helical" evidence="2">
    <location>
        <begin position="44"/>
        <end position="66"/>
    </location>
</feature>
<feature type="transmembrane region" description="Helical" evidence="2">
    <location>
        <begin position="71"/>
        <end position="90"/>
    </location>
</feature>
<protein>
    <recommendedName>
        <fullName>Na(+)/H(+) antiporter subunit G1</fullName>
    </recommendedName>
    <alternativeName>
        <fullName>Mnh complex subunit G1</fullName>
    </alternativeName>
</protein>
<evidence type="ECO:0000250" key="1"/>
<evidence type="ECO:0000255" key="2"/>
<evidence type="ECO:0000305" key="3"/>
<reference key="1">
    <citation type="journal article" date="2001" name="Lancet">
        <title>Whole genome sequencing of meticillin-resistant Staphylococcus aureus.</title>
        <authorList>
            <person name="Kuroda M."/>
            <person name="Ohta T."/>
            <person name="Uchiyama I."/>
            <person name="Baba T."/>
            <person name="Yuzawa H."/>
            <person name="Kobayashi I."/>
            <person name="Cui L."/>
            <person name="Oguchi A."/>
            <person name="Aoki K."/>
            <person name="Nagai Y."/>
            <person name="Lian J.-Q."/>
            <person name="Ito T."/>
            <person name="Kanamori M."/>
            <person name="Matsumaru H."/>
            <person name="Maruyama A."/>
            <person name="Murakami H."/>
            <person name="Hosoyama A."/>
            <person name="Mizutani-Ui Y."/>
            <person name="Takahashi N.K."/>
            <person name="Sawano T."/>
            <person name="Inoue R."/>
            <person name="Kaito C."/>
            <person name="Sekimizu K."/>
            <person name="Hirakawa H."/>
            <person name="Kuhara S."/>
            <person name="Goto S."/>
            <person name="Yabuzaki J."/>
            <person name="Kanehisa M."/>
            <person name="Yamashita A."/>
            <person name="Oshima K."/>
            <person name="Furuya K."/>
            <person name="Yoshino C."/>
            <person name="Shiba T."/>
            <person name="Hattori M."/>
            <person name="Ogasawara N."/>
            <person name="Hayashi H."/>
            <person name="Hiramatsu K."/>
        </authorList>
    </citation>
    <scope>NUCLEOTIDE SEQUENCE [LARGE SCALE GENOMIC DNA]</scope>
    <source>
        <strain>N315</strain>
    </source>
</reference>
<dbReference type="EMBL" id="BA000018">
    <property type="protein sequence ID" value="BAB42046.1"/>
    <property type="molecule type" value="Genomic_DNA"/>
</dbReference>
<dbReference type="PIR" id="C89861">
    <property type="entry name" value="C89861"/>
</dbReference>
<dbReference type="RefSeq" id="WP_000590451.1">
    <property type="nucleotide sequence ID" value="NC_002745.2"/>
</dbReference>
<dbReference type="SMR" id="P60697"/>
<dbReference type="EnsemblBacteria" id="BAB42046">
    <property type="protein sequence ID" value="BAB42046"/>
    <property type="gene ID" value="BAB42046"/>
</dbReference>
<dbReference type="GeneID" id="98345267"/>
<dbReference type="KEGG" id="sau:SA0807"/>
<dbReference type="HOGENOM" id="CLU_121334_0_3_9"/>
<dbReference type="GO" id="GO:0005886">
    <property type="term" value="C:plasma membrane"/>
    <property type="evidence" value="ECO:0007669"/>
    <property type="project" value="UniProtKB-SubCell"/>
</dbReference>
<dbReference type="GO" id="GO:0015385">
    <property type="term" value="F:sodium:proton antiporter activity"/>
    <property type="evidence" value="ECO:0007669"/>
    <property type="project" value="TreeGrafter"/>
</dbReference>
<dbReference type="InterPro" id="IPR005133">
    <property type="entry name" value="PhaG_MnhG_YufB"/>
</dbReference>
<dbReference type="NCBIfam" id="TIGR01300">
    <property type="entry name" value="CPA3_mnhG_phaG"/>
    <property type="match status" value="1"/>
</dbReference>
<dbReference type="NCBIfam" id="NF009237">
    <property type="entry name" value="PRK12587.1"/>
    <property type="match status" value="1"/>
</dbReference>
<dbReference type="NCBIfam" id="NF009314">
    <property type="entry name" value="PRK12674.1-2"/>
    <property type="match status" value="1"/>
</dbReference>
<dbReference type="PANTHER" id="PTHR34703">
    <property type="entry name" value="ANTIPORTER SUBUNIT MNHG2-RELATED"/>
    <property type="match status" value="1"/>
</dbReference>
<dbReference type="PANTHER" id="PTHR34703:SF1">
    <property type="entry name" value="ANTIPORTER SUBUNIT MNHG2-RELATED"/>
    <property type="match status" value="1"/>
</dbReference>
<dbReference type="Pfam" id="PF03334">
    <property type="entry name" value="PhaG_MnhG_YufB"/>
    <property type="match status" value="1"/>
</dbReference>
<sequence length="118" mass="12819">MIKIILISLALIFVIIGALISALAAIGLLRLEDVYSRAHAAGKASTLGAMSLLFGTFLYFIATQGFVNMQLIVAIIFVLITGPLSSHMIMKAAYNIKTPYTKKTKVDEISEDLKDTKL</sequence>
<accession>P60697</accession>
<accession>Q9ZNG0</accession>
<name>MNHG1_STAAN</name>
<gene>
    <name type="primary">mnhG1</name>
    <name type="ordered locus">SA0807</name>
</gene>
<organism>
    <name type="scientific">Staphylococcus aureus (strain N315)</name>
    <dbReference type="NCBI Taxonomy" id="158879"/>
    <lineage>
        <taxon>Bacteria</taxon>
        <taxon>Bacillati</taxon>
        <taxon>Bacillota</taxon>
        <taxon>Bacilli</taxon>
        <taxon>Bacillales</taxon>
        <taxon>Staphylococcaceae</taxon>
        <taxon>Staphylococcus</taxon>
    </lineage>
</organism>
<keyword id="KW-0050">Antiport</keyword>
<keyword id="KW-1003">Cell membrane</keyword>
<keyword id="KW-0375">Hydrogen ion transport</keyword>
<keyword id="KW-0406">Ion transport</keyword>
<keyword id="KW-0472">Membrane</keyword>
<keyword id="KW-0915">Sodium</keyword>
<keyword id="KW-0739">Sodium transport</keyword>
<keyword id="KW-0812">Transmembrane</keyword>
<keyword id="KW-1133">Transmembrane helix</keyword>
<keyword id="KW-0813">Transport</keyword>